<comment type="catalytic activity">
    <reaction>
        <text>L-seryl-[protein] + ATP = O-phospho-L-seryl-[protein] + ADP + H(+)</text>
        <dbReference type="Rhea" id="RHEA:17989"/>
        <dbReference type="Rhea" id="RHEA-COMP:9863"/>
        <dbReference type="Rhea" id="RHEA-COMP:11604"/>
        <dbReference type="ChEBI" id="CHEBI:15378"/>
        <dbReference type="ChEBI" id="CHEBI:29999"/>
        <dbReference type="ChEBI" id="CHEBI:30616"/>
        <dbReference type="ChEBI" id="CHEBI:83421"/>
        <dbReference type="ChEBI" id="CHEBI:456216"/>
        <dbReference type="EC" id="2.7.11.22"/>
    </reaction>
</comment>
<comment type="catalytic activity">
    <reaction>
        <text>L-threonyl-[protein] + ATP = O-phospho-L-threonyl-[protein] + ADP + H(+)</text>
        <dbReference type="Rhea" id="RHEA:46608"/>
        <dbReference type="Rhea" id="RHEA-COMP:11060"/>
        <dbReference type="Rhea" id="RHEA-COMP:11605"/>
        <dbReference type="ChEBI" id="CHEBI:15378"/>
        <dbReference type="ChEBI" id="CHEBI:30013"/>
        <dbReference type="ChEBI" id="CHEBI:30616"/>
        <dbReference type="ChEBI" id="CHEBI:61977"/>
        <dbReference type="ChEBI" id="CHEBI:456216"/>
        <dbReference type="EC" id="2.7.11.22"/>
    </reaction>
</comment>
<comment type="catalytic activity">
    <reaction>
        <text>[DNA-directed RNA polymerase] + ATP = phospho-[DNA-directed RNA polymerase] + ADP + H(+)</text>
        <dbReference type="Rhea" id="RHEA:10216"/>
        <dbReference type="Rhea" id="RHEA-COMP:11321"/>
        <dbReference type="Rhea" id="RHEA-COMP:11322"/>
        <dbReference type="ChEBI" id="CHEBI:15378"/>
        <dbReference type="ChEBI" id="CHEBI:30616"/>
        <dbReference type="ChEBI" id="CHEBI:43176"/>
        <dbReference type="ChEBI" id="CHEBI:68546"/>
        <dbReference type="ChEBI" id="CHEBI:456216"/>
        <dbReference type="EC" id="2.7.11.23"/>
    </reaction>
</comment>
<comment type="induction">
    <text evidence="5">Down-regulated by cytokinin.</text>
</comment>
<comment type="similarity">
    <text evidence="6">Belongs to the protein kinase superfamily. CMGC Ser/Thr protein kinase family. CDC2/CDKX subfamily.</text>
</comment>
<gene>
    <name type="primary">CDKG-2</name>
    <name type="ordered locus">Os04g0488000</name>
    <name type="ordered locus">LOC_Os04g41100</name>
    <name type="ORF">OJ991113_30.14</name>
</gene>
<name>CDKG2_ORYSJ</name>
<accession>Q7XUF4</accession>
<accession>B7F3Y9</accession>
<keyword id="KW-0067">ATP-binding</keyword>
<keyword id="KW-0418">Kinase</keyword>
<keyword id="KW-0547">Nucleotide-binding</keyword>
<keyword id="KW-0597">Phosphoprotein</keyword>
<keyword id="KW-1185">Reference proteome</keyword>
<keyword id="KW-0723">Serine/threonine-protein kinase</keyword>
<keyword id="KW-0808">Transferase</keyword>
<evidence type="ECO:0000250" key="1"/>
<evidence type="ECO:0000255" key="2">
    <source>
        <dbReference type="PROSITE-ProRule" id="PRU00159"/>
    </source>
</evidence>
<evidence type="ECO:0000255" key="3">
    <source>
        <dbReference type="PROSITE-ProRule" id="PRU10027"/>
    </source>
</evidence>
<evidence type="ECO:0000256" key="4">
    <source>
        <dbReference type="SAM" id="MobiDB-lite"/>
    </source>
</evidence>
<evidence type="ECO:0000269" key="5">
    <source>
    </source>
</evidence>
<evidence type="ECO:0000305" key="6"/>
<dbReference type="EC" id="2.7.11.22"/>
<dbReference type="EC" id="2.7.11.23"/>
<dbReference type="EMBL" id="AL662946">
    <property type="protein sequence ID" value="CAD41330.2"/>
    <property type="molecule type" value="Genomic_DNA"/>
</dbReference>
<dbReference type="EMBL" id="AP008210">
    <property type="protein sequence ID" value="BAF15061.1"/>
    <property type="molecule type" value="Genomic_DNA"/>
</dbReference>
<dbReference type="EMBL" id="AP014960">
    <property type="protein sequence ID" value="BAS89811.1"/>
    <property type="molecule type" value="Genomic_DNA"/>
</dbReference>
<dbReference type="EMBL" id="AK111619">
    <property type="protein sequence ID" value="BAG99336.1"/>
    <property type="molecule type" value="mRNA"/>
</dbReference>
<dbReference type="RefSeq" id="XP_015635720.1">
    <property type="nucleotide sequence ID" value="XM_015780234.1"/>
</dbReference>
<dbReference type="RefSeq" id="XP_015635721.1">
    <property type="nucleotide sequence ID" value="XM_015780235.1"/>
</dbReference>
<dbReference type="RefSeq" id="XP_015635722.1">
    <property type="nucleotide sequence ID" value="XM_015780236.1"/>
</dbReference>
<dbReference type="SMR" id="Q7XUF4"/>
<dbReference type="FunCoup" id="Q7XUF4">
    <property type="interactions" value="745"/>
</dbReference>
<dbReference type="STRING" id="39947.Q7XUF4"/>
<dbReference type="PaxDb" id="39947-Q7XUF4"/>
<dbReference type="EnsemblPlants" id="Os04t0488000-01">
    <property type="protein sequence ID" value="Os04t0488000-01"/>
    <property type="gene ID" value="Os04g0488000"/>
</dbReference>
<dbReference type="EnsemblPlants" id="Os04t0488000-02">
    <property type="protein sequence ID" value="Os04t0488000-02"/>
    <property type="gene ID" value="Os04g0488000"/>
</dbReference>
<dbReference type="Gramene" id="Os04t0488000-01">
    <property type="protein sequence ID" value="Os04t0488000-01"/>
    <property type="gene ID" value="Os04g0488000"/>
</dbReference>
<dbReference type="Gramene" id="Os04t0488000-02">
    <property type="protein sequence ID" value="Os04t0488000-02"/>
    <property type="gene ID" value="Os04g0488000"/>
</dbReference>
<dbReference type="KEGG" id="dosa:Os04g0488000"/>
<dbReference type="eggNOG" id="KOG0663">
    <property type="taxonomic scope" value="Eukaryota"/>
</dbReference>
<dbReference type="HOGENOM" id="CLU_000288_91_2_1"/>
<dbReference type="InParanoid" id="Q7XUF4"/>
<dbReference type="OMA" id="NIRYPDH"/>
<dbReference type="OrthoDB" id="1732493at2759"/>
<dbReference type="Proteomes" id="UP000000763">
    <property type="component" value="Chromosome 4"/>
</dbReference>
<dbReference type="Proteomes" id="UP000059680">
    <property type="component" value="Chromosome 4"/>
</dbReference>
<dbReference type="ExpressionAtlas" id="Q7XUF4">
    <property type="expression patterns" value="baseline and differential"/>
</dbReference>
<dbReference type="GO" id="GO:0005634">
    <property type="term" value="C:nucleus"/>
    <property type="evidence" value="ECO:0000318"/>
    <property type="project" value="GO_Central"/>
</dbReference>
<dbReference type="GO" id="GO:0005524">
    <property type="term" value="F:ATP binding"/>
    <property type="evidence" value="ECO:0007669"/>
    <property type="project" value="UniProtKB-KW"/>
</dbReference>
<dbReference type="GO" id="GO:0004693">
    <property type="term" value="F:cyclin-dependent protein serine/threonine kinase activity"/>
    <property type="evidence" value="ECO:0007669"/>
    <property type="project" value="UniProtKB-EC"/>
</dbReference>
<dbReference type="GO" id="GO:0106310">
    <property type="term" value="F:protein serine kinase activity"/>
    <property type="evidence" value="ECO:0007669"/>
    <property type="project" value="RHEA"/>
</dbReference>
<dbReference type="GO" id="GO:0004674">
    <property type="term" value="F:protein serine/threonine kinase activity"/>
    <property type="evidence" value="ECO:0000318"/>
    <property type="project" value="GO_Central"/>
</dbReference>
<dbReference type="GO" id="GO:0008353">
    <property type="term" value="F:RNA polymerase II CTD heptapeptide repeat kinase activity"/>
    <property type="evidence" value="ECO:0007669"/>
    <property type="project" value="UniProtKB-EC"/>
</dbReference>
<dbReference type="CDD" id="cd07843">
    <property type="entry name" value="STKc_CDC2L1"/>
    <property type="match status" value="1"/>
</dbReference>
<dbReference type="FunFam" id="1.10.510.10:FF:000211">
    <property type="entry name" value="Cyclin-dependent kinase G-2"/>
    <property type="match status" value="1"/>
</dbReference>
<dbReference type="FunFam" id="3.30.200.20:FF:000172">
    <property type="entry name" value="cyclin-dependent kinase G-2 isoform X1"/>
    <property type="match status" value="1"/>
</dbReference>
<dbReference type="Gene3D" id="3.30.200.20">
    <property type="entry name" value="Phosphorylase Kinase, domain 1"/>
    <property type="match status" value="1"/>
</dbReference>
<dbReference type="Gene3D" id="1.10.510.10">
    <property type="entry name" value="Transferase(Phosphotransferase) domain 1"/>
    <property type="match status" value="1"/>
</dbReference>
<dbReference type="InterPro" id="IPR050108">
    <property type="entry name" value="CDK"/>
</dbReference>
<dbReference type="InterPro" id="IPR045267">
    <property type="entry name" value="CDK11/PITSLRE_STKc"/>
</dbReference>
<dbReference type="InterPro" id="IPR011009">
    <property type="entry name" value="Kinase-like_dom_sf"/>
</dbReference>
<dbReference type="InterPro" id="IPR000719">
    <property type="entry name" value="Prot_kinase_dom"/>
</dbReference>
<dbReference type="InterPro" id="IPR008271">
    <property type="entry name" value="Ser/Thr_kinase_AS"/>
</dbReference>
<dbReference type="PANTHER" id="PTHR24056">
    <property type="entry name" value="CELL DIVISION PROTEIN KINASE"/>
    <property type="match status" value="1"/>
</dbReference>
<dbReference type="PANTHER" id="PTHR24056:SF107">
    <property type="entry name" value="CYCLIN-DEPENDENT KINASE 11A-RELATED"/>
    <property type="match status" value="1"/>
</dbReference>
<dbReference type="Pfam" id="PF00069">
    <property type="entry name" value="Pkinase"/>
    <property type="match status" value="1"/>
</dbReference>
<dbReference type="SMART" id="SM00220">
    <property type="entry name" value="S_TKc"/>
    <property type="match status" value="1"/>
</dbReference>
<dbReference type="SUPFAM" id="SSF56112">
    <property type="entry name" value="Protein kinase-like (PK-like)"/>
    <property type="match status" value="1"/>
</dbReference>
<dbReference type="PROSITE" id="PS50011">
    <property type="entry name" value="PROTEIN_KINASE_DOM"/>
    <property type="match status" value="1"/>
</dbReference>
<dbReference type="PROSITE" id="PS00108">
    <property type="entry name" value="PROTEIN_KINASE_ST"/>
    <property type="match status" value="1"/>
</dbReference>
<sequence length="710" mass="79883">MAAGRHGGYRDYEARERELDAEASRRSKEQQHHHHPSGRHQRGDSDPRCEADRRRDGGRSRGGRELSNGYGHRRSPPPRSRLSARLGDREPGEVLSGSASDDSGGRPHRARENGVSSSSRDGESVVAASASSPSKKRKFSPIIWDRDSPKPMHSDVAKGKKAVDSVPTELPLPPPPPLPPQDHIPERLAVEKSPMDVEPAVASESPEQLQEHAESRVMEEEEEYSTMRNISTSRWAGANDDEEEGAPHRKKKSASPADSAELGQRKKALSPELGEVVASDISGGRTMSRSSDSGRLGADENEDLEVDKDDYMDVDRDDDGNSDIANHQSGMDSEYEVRRSETPEPVKPPHRCINMLQGCRSVDEFERLNKINEGTYGVVYRARDKKTGEIVALKKVKMEKEREGFPLTSLREINILLSFHHPSIVDVKEVVVGSSLDSIFMVMEYMEHDLKGVMEAMKQPYSQSEVKCLMLQLLEGVKYLHDNWVLHRDLKTSNLLLNNRGELKICDFGLSRQYGSPLKPYTQLVVTLWYRAPELLLGTKEYSTAIDMWSVGCIMAELLAKEPLFNGKTEFEQLDKIFRTLGTPNEKIWPGYAKLPGVKVNFVKQPYNRLRDKFPAASFSGRPILSEAGFDLLNNLLTYDPEKRLSADAALQHEWFREVPLPKSKDFMPTFPALNELDRRTKRYLKSPDPLEEQRLKELQGNIGNRGLFG</sequence>
<organism>
    <name type="scientific">Oryza sativa subsp. japonica</name>
    <name type="common">Rice</name>
    <dbReference type="NCBI Taxonomy" id="39947"/>
    <lineage>
        <taxon>Eukaryota</taxon>
        <taxon>Viridiplantae</taxon>
        <taxon>Streptophyta</taxon>
        <taxon>Embryophyta</taxon>
        <taxon>Tracheophyta</taxon>
        <taxon>Spermatophyta</taxon>
        <taxon>Magnoliopsida</taxon>
        <taxon>Liliopsida</taxon>
        <taxon>Poales</taxon>
        <taxon>Poaceae</taxon>
        <taxon>BOP clade</taxon>
        <taxon>Oryzoideae</taxon>
        <taxon>Oryzeae</taxon>
        <taxon>Oryzinae</taxon>
        <taxon>Oryza</taxon>
        <taxon>Oryza sativa</taxon>
    </lineage>
</organism>
<protein>
    <recommendedName>
        <fullName>Cyclin-dependent kinase G-2</fullName>
        <shortName>CDKG;2</shortName>
        <ecNumber>2.7.11.22</ecNumber>
        <ecNumber>2.7.11.23</ecNumber>
    </recommendedName>
</protein>
<feature type="chain" id="PRO_0000296112" description="Cyclin-dependent kinase G-2">
    <location>
        <begin position="1"/>
        <end position="710"/>
    </location>
</feature>
<feature type="domain" description="Protein kinase" evidence="2">
    <location>
        <begin position="365"/>
        <end position="656"/>
    </location>
</feature>
<feature type="region of interest" description="Disordered" evidence="4">
    <location>
        <begin position="1"/>
        <end position="350"/>
    </location>
</feature>
<feature type="compositionally biased region" description="Basic and acidic residues" evidence="4">
    <location>
        <begin position="8"/>
        <end position="30"/>
    </location>
</feature>
<feature type="compositionally biased region" description="Basic residues" evidence="4">
    <location>
        <begin position="31"/>
        <end position="40"/>
    </location>
</feature>
<feature type="compositionally biased region" description="Basic and acidic residues" evidence="4">
    <location>
        <begin position="41"/>
        <end position="64"/>
    </location>
</feature>
<feature type="compositionally biased region" description="Low complexity" evidence="4">
    <location>
        <begin position="124"/>
        <end position="133"/>
    </location>
</feature>
<feature type="compositionally biased region" description="Basic and acidic residues" evidence="4">
    <location>
        <begin position="144"/>
        <end position="163"/>
    </location>
</feature>
<feature type="compositionally biased region" description="Pro residues" evidence="4">
    <location>
        <begin position="170"/>
        <end position="182"/>
    </location>
</feature>
<feature type="compositionally biased region" description="Basic and acidic residues" evidence="4">
    <location>
        <begin position="183"/>
        <end position="195"/>
    </location>
</feature>
<feature type="compositionally biased region" description="Basic and acidic residues" evidence="4">
    <location>
        <begin position="209"/>
        <end position="218"/>
    </location>
</feature>
<feature type="compositionally biased region" description="Acidic residues" evidence="4">
    <location>
        <begin position="299"/>
        <end position="308"/>
    </location>
</feature>
<feature type="compositionally biased region" description="Basic and acidic residues" evidence="4">
    <location>
        <begin position="335"/>
        <end position="344"/>
    </location>
</feature>
<feature type="active site" description="Proton acceptor" evidence="2 3">
    <location>
        <position position="489"/>
    </location>
</feature>
<feature type="binding site" evidence="2">
    <location>
        <begin position="371"/>
        <end position="379"/>
    </location>
    <ligand>
        <name>ATP</name>
        <dbReference type="ChEBI" id="CHEBI:30616"/>
    </ligand>
</feature>
<feature type="binding site" evidence="2">
    <location>
        <position position="394"/>
    </location>
    <ligand>
        <name>ATP</name>
        <dbReference type="ChEBI" id="CHEBI:30616"/>
    </ligand>
</feature>
<feature type="modified residue" description="Phosphothreonine" evidence="1">
    <location>
        <position position="375"/>
    </location>
</feature>
<feature type="modified residue" description="Phosphotyrosine" evidence="1">
    <location>
        <position position="376"/>
    </location>
</feature>
<feature type="modified residue" description="Phosphoserine" evidence="1">
    <location>
        <position position="516"/>
    </location>
</feature>
<feature type="modified residue" description="Phosphothreonine" evidence="1">
    <location>
        <position position="522"/>
    </location>
</feature>
<proteinExistence type="evidence at transcript level"/>
<reference key="1">
    <citation type="journal article" date="2002" name="Nature">
        <title>Sequence and analysis of rice chromosome 4.</title>
        <authorList>
            <person name="Feng Q."/>
            <person name="Zhang Y."/>
            <person name="Hao P."/>
            <person name="Wang S."/>
            <person name="Fu G."/>
            <person name="Huang Y."/>
            <person name="Li Y."/>
            <person name="Zhu J."/>
            <person name="Liu Y."/>
            <person name="Hu X."/>
            <person name="Jia P."/>
            <person name="Zhang Y."/>
            <person name="Zhao Q."/>
            <person name="Ying K."/>
            <person name="Yu S."/>
            <person name="Tang Y."/>
            <person name="Weng Q."/>
            <person name="Zhang L."/>
            <person name="Lu Y."/>
            <person name="Mu J."/>
            <person name="Lu Y."/>
            <person name="Zhang L.S."/>
            <person name="Yu Z."/>
            <person name="Fan D."/>
            <person name="Liu X."/>
            <person name="Lu T."/>
            <person name="Li C."/>
            <person name="Wu Y."/>
            <person name="Sun T."/>
            <person name="Lei H."/>
            <person name="Li T."/>
            <person name="Hu H."/>
            <person name="Guan J."/>
            <person name="Wu M."/>
            <person name="Zhang R."/>
            <person name="Zhou B."/>
            <person name="Chen Z."/>
            <person name="Chen L."/>
            <person name="Jin Z."/>
            <person name="Wang R."/>
            <person name="Yin H."/>
            <person name="Cai Z."/>
            <person name="Ren S."/>
            <person name="Lv G."/>
            <person name="Gu W."/>
            <person name="Zhu G."/>
            <person name="Tu Y."/>
            <person name="Jia J."/>
            <person name="Zhang Y."/>
            <person name="Chen J."/>
            <person name="Kang H."/>
            <person name="Chen X."/>
            <person name="Shao C."/>
            <person name="Sun Y."/>
            <person name="Hu Q."/>
            <person name="Zhang X."/>
            <person name="Zhang W."/>
            <person name="Wang L."/>
            <person name="Ding C."/>
            <person name="Sheng H."/>
            <person name="Gu J."/>
            <person name="Chen S."/>
            <person name="Ni L."/>
            <person name="Zhu F."/>
            <person name="Chen W."/>
            <person name="Lan L."/>
            <person name="Lai Y."/>
            <person name="Cheng Z."/>
            <person name="Gu M."/>
            <person name="Jiang J."/>
            <person name="Li J."/>
            <person name="Hong G."/>
            <person name="Xue Y."/>
            <person name="Han B."/>
        </authorList>
    </citation>
    <scope>NUCLEOTIDE SEQUENCE [LARGE SCALE GENOMIC DNA]</scope>
    <source>
        <strain>cv. Nipponbare</strain>
    </source>
</reference>
<reference key="2">
    <citation type="journal article" date="2005" name="Nature">
        <title>The map-based sequence of the rice genome.</title>
        <authorList>
            <consortium name="International rice genome sequencing project (IRGSP)"/>
        </authorList>
    </citation>
    <scope>NUCLEOTIDE SEQUENCE [LARGE SCALE GENOMIC DNA]</scope>
    <source>
        <strain>cv. Nipponbare</strain>
    </source>
</reference>
<reference key="3">
    <citation type="journal article" date="2008" name="Nucleic Acids Res.">
        <title>The rice annotation project database (RAP-DB): 2008 update.</title>
        <authorList>
            <consortium name="The rice annotation project (RAP)"/>
        </authorList>
    </citation>
    <scope>GENOME REANNOTATION</scope>
    <source>
        <strain>cv. Nipponbare</strain>
    </source>
</reference>
<reference key="4">
    <citation type="journal article" date="2013" name="Rice">
        <title>Improvement of the Oryza sativa Nipponbare reference genome using next generation sequence and optical map data.</title>
        <authorList>
            <person name="Kawahara Y."/>
            <person name="de la Bastide M."/>
            <person name="Hamilton J.P."/>
            <person name="Kanamori H."/>
            <person name="McCombie W.R."/>
            <person name="Ouyang S."/>
            <person name="Schwartz D.C."/>
            <person name="Tanaka T."/>
            <person name="Wu J."/>
            <person name="Zhou S."/>
            <person name="Childs K.L."/>
            <person name="Davidson R.M."/>
            <person name="Lin H."/>
            <person name="Quesada-Ocampo L."/>
            <person name="Vaillancourt B."/>
            <person name="Sakai H."/>
            <person name="Lee S.S."/>
            <person name="Kim J."/>
            <person name="Numa H."/>
            <person name="Itoh T."/>
            <person name="Buell C.R."/>
            <person name="Matsumoto T."/>
        </authorList>
    </citation>
    <scope>GENOME REANNOTATION</scope>
    <source>
        <strain>cv. Nipponbare</strain>
    </source>
</reference>
<reference key="5">
    <citation type="journal article" date="2003" name="Science">
        <title>Collection, mapping, and annotation of over 28,000 cDNA clones from japonica rice.</title>
        <authorList>
            <consortium name="The rice full-length cDNA consortium"/>
        </authorList>
    </citation>
    <scope>NUCLEOTIDE SEQUENCE [LARGE SCALE MRNA]</scope>
    <source>
        <strain>cv. Nipponbare</strain>
    </source>
</reference>
<reference key="6">
    <citation type="journal article" date="2007" name="Plant Mol. Biol.">
        <title>Genome-wide identification and expression analysis of rice cell cycle genes.</title>
        <authorList>
            <person name="Guo J."/>
            <person name="Song J."/>
            <person name="Wang F."/>
            <person name="Zhang X.S."/>
        </authorList>
    </citation>
    <scope>INDUCTION</scope>
    <scope>GENE FAMILY</scope>
</reference>